<evidence type="ECO:0000255" key="1">
    <source>
        <dbReference type="HAMAP-Rule" id="MF_01020"/>
    </source>
</evidence>
<gene>
    <name evidence="1" type="primary">hisE</name>
    <name type="ordered locus">Mmcs_3146</name>
</gene>
<reference key="1">
    <citation type="submission" date="2006-06" db="EMBL/GenBank/DDBJ databases">
        <title>Complete sequence of chromosome of Mycobacterium sp. MCS.</title>
        <authorList>
            <consortium name="US DOE Joint Genome Institute"/>
            <person name="Copeland A."/>
            <person name="Lucas S."/>
            <person name="Lapidus A."/>
            <person name="Barry K."/>
            <person name="Detter J.C."/>
            <person name="Glavina del Rio T."/>
            <person name="Hammon N."/>
            <person name="Israni S."/>
            <person name="Dalin E."/>
            <person name="Tice H."/>
            <person name="Pitluck S."/>
            <person name="Martinez M."/>
            <person name="Schmutz J."/>
            <person name="Larimer F."/>
            <person name="Land M."/>
            <person name="Hauser L."/>
            <person name="Kyrpides N."/>
            <person name="Kim E."/>
            <person name="Miller C.D."/>
            <person name="Hughes J.E."/>
            <person name="Anderson A.J."/>
            <person name="Sims R.C."/>
            <person name="Richardson P."/>
        </authorList>
    </citation>
    <scope>NUCLEOTIDE SEQUENCE [LARGE SCALE GENOMIC DNA]</scope>
    <source>
        <strain>MCS</strain>
    </source>
</reference>
<sequence>MGESQPVKTFDALFDELTERARTRPEGSGTVAALDGGVHGLGKKILEEAGEVWLAAEHESDEALAEEISQLLYWTQVLMIARGLSPDDVYRKL</sequence>
<feature type="chain" id="PRO_1000063359" description="Phosphoribosyl-ATP pyrophosphatase">
    <location>
        <begin position="1"/>
        <end position="93"/>
    </location>
</feature>
<proteinExistence type="inferred from homology"/>
<dbReference type="EC" id="3.6.1.31" evidence="1"/>
<dbReference type="EMBL" id="CP000384">
    <property type="protein sequence ID" value="ABG09253.1"/>
    <property type="molecule type" value="Genomic_DNA"/>
</dbReference>
<dbReference type="SMR" id="Q1B781"/>
<dbReference type="KEGG" id="mmc:Mmcs_3146"/>
<dbReference type="HOGENOM" id="CLU_123337_2_1_11"/>
<dbReference type="BioCyc" id="MSP164756:G1G6O-3211-MONOMER"/>
<dbReference type="UniPathway" id="UPA00031">
    <property type="reaction ID" value="UER00007"/>
</dbReference>
<dbReference type="GO" id="GO:0005737">
    <property type="term" value="C:cytoplasm"/>
    <property type="evidence" value="ECO:0007669"/>
    <property type="project" value="UniProtKB-SubCell"/>
</dbReference>
<dbReference type="GO" id="GO:0005524">
    <property type="term" value="F:ATP binding"/>
    <property type="evidence" value="ECO:0007669"/>
    <property type="project" value="UniProtKB-KW"/>
</dbReference>
<dbReference type="GO" id="GO:0004636">
    <property type="term" value="F:phosphoribosyl-ATP diphosphatase activity"/>
    <property type="evidence" value="ECO:0007669"/>
    <property type="project" value="UniProtKB-UniRule"/>
</dbReference>
<dbReference type="GO" id="GO:0000105">
    <property type="term" value="P:L-histidine biosynthetic process"/>
    <property type="evidence" value="ECO:0007669"/>
    <property type="project" value="UniProtKB-UniRule"/>
</dbReference>
<dbReference type="CDD" id="cd11547">
    <property type="entry name" value="NTP-PPase_HisE"/>
    <property type="match status" value="1"/>
</dbReference>
<dbReference type="Gene3D" id="1.10.287.1080">
    <property type="entry name" value="MazG-like"/>
    <property type="match status" value="1"/>
</dbReference>
<dbReference type="HAMAP" id="MF_01020">
    <property type="entry name" value="HisE"/>
    <property type="match status" value="1"/>
</dbReference>
<dbReference type="InterPro" id="IPR008179">
    <property type="entry name" value="HisE"/>
</dbReference>
<dbReference type="InterPro" id="IPR021130">
    <property type="entry name" value="PRib-ATP_PPHydrolase-like"/>
</dbReference>
<dbReference type="NCBIfam" id="TIGR03188">
    <property type="entry name" value="histidine_hisI"/>
    <property type="match status" value="1"/>
</dbReference>
<dbReference type="NCBIfam" id="NF001610">
    <property type="entry name" value="PRK00400.1-1"/>
    <property type="match status" value="1"/>
</dbReference>
<dbReference type="PANTHER" id="PTHR42945">
    <property type="entry name" value="HISTIDINE BIOSYNTHESIS BIFUNCTIONAL PROTEIN"/>
    <property type="match status" value="1"/>
</dbReference>
<dbReference type="PANTHER" id="PTHR42945:SF1">
    <property type="entry name" value="HISTIDINE BIOSYNTHESIS BIFUNCTIONAL PROTEIN HIS7"/>
    <property type="match status" value="1"/>
</dbReference>
<dbReference type="Pfam" id="PF01503">
    <property type="entry name" value="PRA-PH"/>
    <property type="match status" value="1"/>
</dbReference>
<dbReference type="SUPFAM" id="SSF101386">
    <property type="entry name" value="all-alpha NTP pyrophosphatases"/>
    <property type="match status" value="1"/>
</dbReference>
<organism>
    <name type="scientific">Mycobacterium sp. (strain MCS)</name>
    <dbReference type="NCBI Taxonomy" id="164756"/>
    <lineage>
        <taxon>Bacteria</taxon>
        <taxon>Bacillati</taxon>
        <taxon>Actinomycetota</taxon>
        <taxon>Actinomycetes</taxon>
        <taxon>Mycobacteriales</taxon>
        <taxon>Mycobacteriaceae</taxon>
        <taxon>Mycobacterium</taxon>
    </lineage>
</organism>
<protein>
    <recommendedName>
        <fullName evidence="1">Phosphoribosyl-ATP pyrophosphatase</fullName>
        <shortName evidence="1">PRA-PH</shortName>
        <ecNumber evidence="1">3.6.1.31</ecNumber>
    </recommendedName>
</protein>
<name>HIS2_MYCSS</name>
<comment type="catalytic activity">
    <reaction evidence="1">
        <text>1-(5-phospho-beta-D-ribosyl)-ATP + H2O = 1-(5-phospho-beta-D-ribosyl)-5'-AMP + diphosphate + H(+)</text>
        <dbReference type="Rhea" id="RHEA:22828"/>
        <dbReference type="ChEBI" id="CHEBI:15377"/>
        <dbReference type="ChEBI" id="CHEBI:15378"/>
        <dbReference type="ChEBI" id="CHEBI:33019"/>
        <dbReference type="ChEBI" id="CHEBI:59457"/>
        <dbReference type="ChEBI" id="CHEBI:73183"/>
        <dbReference type="EC" id="3.6.1.31"/>
    </reaction>
</comment>
<comment type="pathway">
    <text evidence="1">Amino-acid biosynthesis; L-histidine biosynthesis; L-histidine from 5-phospho-alpha-D-ribose 1-diphosphate: step 2/9.</text>
</comment>
<comment type="subcellular location">
    <subcellularLocation>
        <location evidence="1">Cytoplasm</location>
    </subcellularLocation>
</comment>
<comment type="similarity">
    <text evidence="1">Belongs to the PRA-PH family.</text>
</comment>
<accession>Q1B781</accession>
<keyword id="KW-0028">Amino-acid biosynthesis</keyword>
<keyword id="KW-0067">ATP-binding</keyword>
<keyword id="KW-0963">Cytoplasm</keyword>
<keyword id="KW-0368">Histidine biosynthesis</keyword>
<keyword id="KW-0378">Hydrolase</keyword>
<keyword id="KW-0547">Nucleotide-binding</keyword>